<reference key="1">
    <citation type="submission" date="2004-07" db="EMBL/GenBank/DDBJ databases">
        <authorList>
            <consortium name="NIH - Xenopus Gene Collection (XGC) project"/>
        </authorList>
    </citation>
    <scope>NUCLEOTIDE SEQUENCE [LARGE SCALE MRNA]</scope>
    <source>
        <tissue>Embryo</tissue>
    </source>
</reference>
<protein>
    <recommendedName>
        <fullName evidence="3">Small ribosomal subunit protein uS7m</fullName>
    </recommendedName>
    <alternativeName>
        <fullName>28S ribosomal protein S7, mitochondrial</fullName>
        <shortName>MRP-S7</shortName>
        <shortName>S7mt</shortName>
    </alternativeName>
</protein>
<proteinExistence type="evidence at transcript level"/>
<evidence type="ECO:0000250" key="1"/>
<evidence type="ECO:0000255" key="2"/>
<evidence type="ECO:0000305" key="3"/>
<feature type="transit peptide" description="Mitochondrion" evidence="2">
    <location>
        <begin position="1"/>
        <end position="28"/>
    </location>
</feature>
<feature type="chain" id="PRO_0000273061" description="Small ribosomal subunit protein uS7m">
    <location>
        <begin position="29"/>
        <end position="233"/>
    </location>
</feature>
<dbReference type="EMBL" id="BC077362">
    <property type="protein sequence ID" value="AAH77362.1"/>
    <property type="molecule type" value="mRNA"/>
</dbReference>
<dbReference type="RefSeq" id="NP_001086729.1">
    <property type="nucleotide sequence ID" value="NM_001093260.1"/>
</dbReference>
<dbReference type="SMR" id="Q6DDY9"/>
<dbReference type="DNASU" id="446564"/>
<dbReference type="GeneID" id="446564"/>
<dbReference type="KEGG" id="xla:446564"/>
<dbReference type="AGR" id="Xenbase:XB-GENE-6255931"/>
<dbReference type="CTD" id="446564"/>
<dbReference type="Xenbase" id="XB-GENE-6255931">
    <property type="gene designation" value="mrps7.L"/>
</dbReference>
<dbReference type="OMA" id="HELHKQC"/>
<dbReference type="OrthoDB" id="9972728at2759"/>
<dbReference type="Proteomes" id="UP000186698">
    <property type="component" value="Chromosome 9_10L"/>
</dbReference>
<dbReference type="Bgee" id="446564">
    <property type="expression patterns" value="Expressed in blastula and 19 other cell types or tissues"/>
</dbReference>
<dbReference type="GO" id="GO:0005763">
    <property type="term" value="C:mitochondrial small ribosomal subunit"/>
    <property type="evidence" value="ECO:0000250"/>
    <property type="project" value="UniProtKB"/>
</dbReference>
<dbReference type="GO" id="GO:0005840">
    <property type="term" value="C:ribosome"/>
    <property type="evidence" value="ECO:0000318"/>
    <property type="project" value="GO_Central"/>
</dbReference>
<dbReference type="GO" id="GO:0003729">
    <property type="term" value="F:mRNA binding"/>
    <property type="evidence" value="ECO:0000318"/>
    <property type="project" value="GO_Central"/>
</dbReference>
<dbReference type="GO" id="GO:0019843">
    <property type="term" value="F:rRNA binding"/>
    <property type="evidence" value="ECO:0000318"/>
    <property type="project" value="GO_Central"/>
</dbReference>
<dbReference type="GO" id="GO:0003735">
    <property type="term" value="F:structural constituent of ribosome"/>
    <property type="evidence" value="ECO:0000250"/>
    <property type="project" value="UniProtKB"/>
</dbReference>
<dbReference type="GO" id="GO:0032543">
    <property type="term" value="P:mitochondrial translation"/>
    <property type="evidence" value="ECO:0000250"/>
    <property type="project" value="UniProtKB"/>
</dbReference>
<dbReference type="GO" id="GO:0000028">
    <property type="term" value="P:ribosomal small subunit assembly"/>
    <property type="evidence" value="ECO:0000318"/>
    <property type="project" value="GO_Central"/>
</dbReference>
<dbReference type="GO" id="GO:0006412">
    <property type="term" value="P:translation"/>
    <property type="evidence" value="ECO:0000318"/>
    <property type="project" value="GO_Central"/>
</dbReference>
<dbReference type="CDD" id="cd14870">
    <property type="entry name" value="uS7_Mitochondria_Mammalian"/>
    <property type="match status" value="1"/>
</dbReference>
<dbReference type="FunFam" id="1.10.455.10:FF:000004">
    <property type="entry name" value="28S ribosomal protein S7, mitochondrial"/>
    <property type="match status" value="1"/>
</dbReference>
<dbReference type="Gene3D" id="1.10.455.10">
    <property type="entry name" value="Ribosomal protein S7 domain"/>
    <property type="match status" value="1"/>
</dbReference>
<dbReference type="InterPro" id="IPR000235">
    <property type="entry name" value="Ribosomal_uS7"/>
</dbReference>
<dbReference type="InterPro" id="IPR023798">
    <property type="entry name" value="Ribosomal_uS7_dom"/>
</dbReference>
<dbReference type="InterPro" id="IPR036823">
    <property type="entry name" value="Ribosomal_uS7_dom_sf"/>
</dbReference>
<dbReference type="PANTHER" id="PTHR11205">
    <property type="entry name" value="RIBOSOMAL PROTEIN S7"/>
    <property type="match status" value="1"/>
</dbReference>
<dbReference type="Pfam" id="PF00177">
    <property type="entry name" value="Ribosomal_S7"/>
    <property type="match status" value="1"/>
</dbReference>
<dbReference type="SUPFAM" id="SSF47973">
    <property type="entry name" value="Ribosomal protein S7"/>
    <property type="match status" value="1"/>
</dbReference>
<accession>Q6DDY9</accession>
<sequence length="233" mass="27313">MAAPTGKLLVHRIRAGLTCLTQVRWSRYSPQYLDPETDKQVYSRPLEELSEQERTERELKIVRPIKAAPSNVTSSVFSDPTISKFTNMMMKGGNKNLSRSIMNQTLEQIKRTQLEKYYKAPEEERASIECNPYTIFHQALHNCQPIIGLTSILRGGKSYQVPTPLKENRRRFLAMKWLITECRDNKHRRTLMYEKLSQALLDAYQMQGEVVKKKHELHKMAEANRAFAHFRWW</sequence>
<name>RT07_XENLA</name>
<keyword id="KW-0496">Mitochondrion</keyword>
<keyword id="KW-1185">Reference proteome</keyword>
<keyword id="KW-0687">Ribonucleoprotein</keyword>
<keyword id="KW-0689">Ribosomal protein</keyword>
<keyword id="KW-0809">Transit peptide</keyword>
<organism>
    <name type="scientific">Xenopus laevis</name>
    <name type="common">African clawed frog</name>
    <dbReference type="NCBI Taxonomy" id="8355"/>
    <lineage>
        <taxon>Eukaryota</taxon>
        <taxon>Metazoa</taxon>
        <taxon>Chordata</taxon>
        <taxon>Craniata</taxon>
        <taxon>Vertebrata</taxon>
        <taxon>Euteleostomi</taxon>
        <taxon>Amphibia</taxon>
        <taxon>Batrachia</taxon>
        <taxon>Anura</taxon>
        <taxon>Pipoidea</taxon>
        <taxon>Pipidae</taxon>
        <taxon>Xenopodinae</taxon>
        <taxon>Xenopus</taxon>
        <taxon>Xenopus</taxon>
    </lineage>
</organism>
<comment type="subunit">
    <text evidence="1">Component of the mitochondrial ribosome small subunit (28S) which comprises a 12S rRNA and about 30 distinct proteins.</text>
</comment>
<comment type="subcellular location">
    <subcellularLocation>
        <location evidence="1">Mitochondrion</location>
    </subcellularLocation>
</comment>
<comment type="similarity">
    <text evidence="3">Belongs to the universal ribosomal protein uS7 family.</text>
</comment>
<gene>
    <name type="primary">mrps7</name>
</gene>